<evidence type="ECO:0000250" key="1">
    <source>
        <dbReference type="UniProtKB" id="P0DMJ5"/>
    </source>
</evidence>
<evidence type="ECO:0000250" key="2">
    <source>
        <dbReference type="UniProtKB" id="P31713"/>
    </source>
</evidence>
<evidence type="ECO:0000255" key="3">
    <source>
        <dbReference type="PROSITE-ProRule" id="PRU00031"/>
    </source>
</evidence>
<evidence type="ECO:0000269" key="4">
    <source>
    </source>
</evidence>
<evidence type="ECO:0000303" key="5">
    <source>
    </source>
</evidence>
<evidence type="ECO:0000305" key="6"/>
<evidence type="ECO:0000305" key="7">
    <source>
    </source>
</evidence>
<reference evidence="6" key="1">
    <citation type="journal article" date="2018" name="J. Proteomics">
        <title>Peptide fingerprinting of the sea anemone Heteractis magnifica mucus revealed neurotoxins, Kunitz-type proteinase inhibitors and a new beta-defensin alpha-amylase inhibitor.</title>
        <authorList>
            <person name="Sintsova O."/>
            <person name="Gladkikh I."/>
            <person name="Chausova V."/>
            <person name="Monastyrnaya M."/>
            <person name="Anastyuk S."/>
            <person name="Chernikov O."/>
            <person name="Yurchenko E."/>
            <person name="Aminin D."/>
            <person name="Isaeva M."/>
            <person name="Leychenko E."/>
            <person name="Kozlovskaya E."/>
        </authorList>
    </citation>
    <scope>PROTEIN SEQUENCE</scope>
    <scope>FUNCTION</scope>
    <scope>MASS SPECTROMETRY</scope>
    <scope>PRESENCE OF DISULFIDE BONDS</scope>
</reference>
<protein>
    <recommendedName>
        <fullName evidence="6">PI-stichotoxin-Hmg3b</fullName>
        <shortName evidence="6">PI-SHTX-Hmg3b</shortName>
    </recommendedName>
    <alternativeName>
        <fullName evidence="5">Kunitz-type serine protease inhibitor HMGS1</fullName>
    </alternativeName>
</protein>
<name>3BPI_HETMG</name>
<keyword id="KW-0903">Direct protein sequencing</keyword>
<keyword id="KW-1015">Disulfide bond</keyword>
<keyword id="KW-0166">Nematocyst</keyword>
<keyword id="KW-0646">Protease inhibitor</keyword>
<keyword id="KW-0964">Secreted</keyword>
<keyword id="KW-0722">Serine protease inhibitor</keyword>
<accession>C0HK73</accession>
<comment type="function">
    <text evidence="1">Serine protease inhibitor.</text>
</comment>
<comment type="subcellular location">
    <subcellularLocation>
        <location evidence="7">Secreted</location>
    </subcellularLocation>
    <subcellularLocation>
        <location evidence="6">Nematocyst</location>
    </subcellularLocation>
</comment>
<comment type="PTM">
    <text evidence="4">Contains three disulfide bonds.</text>
</comment>
<comment type="mass spectrometry"/>
<comment type="miscellaneous">
    <text evidence="6">A synonymy between H.magnifica and R.crispa is controversial.</text>
</comment>
<comment type="similarity">
    <text evidence="6">Belongs to the venom Kunitz-type family. Sea anemone type 2 potassium channel toxin subfamily.</text>
</comment>
<organism evidence="5">
    <name type="scientific">Heteractis magnifica</name>
    <name type="common">Magnificent sea anemone</name>
    <name type="synonym">Radianthus magnifica</name>
    <dbReference type="NCBI Taxonomy" id="38281"/>
    <lineage>
        <taxon>Eukaryota</taxon>
        <taxon>Metazoa</taxon>
        <taxon>Cnidaria</taxon>
        <taxon>Anthozoa</taxon>
        <taxon>Hexacorallia</taxon>
        <taxon>Actiniaria</taxon>
        <taxon>Stichodactylidae</taxon>
        <taxon>Heteractis</taxon>
    </lineage>
</organism>
<dbReference type="SMR" id="C0HK73"/>
<dbReference type="GO" id="GO:0005615">
    <property type="term" value="C:extracellular space"/>
    <property type="evidence" value="ECO:0007669"/>
    <property type="project" value="TreeGrafter"/>
</dbReference>
<dbReference type="GO" id="GO:0042151">
    <property type="term" value="C:nematocyst"/>
    <property type="evidence" value="ECO:0007669"/>
    <property type="project" value="UniProtKB-SubCell"/>
</dbReference>
<dbReference type="GO" id="GO:0004867">
    <property type="term" value="F:serine-type endopeptidase inhibitor activity"/>
    <property type="evidence" value="ECO:0007669"/>
    <property type="project" value="UniProtKB-KW"/>
</dbReference>
<dbReference type="CDD" id="cd22618">
    <property type="entry name" value="Kunitz_SHPI"/>
    <property type="match status" value="1"/>
</dbReference>
<dbReference type="FunFam" id="4.10.410.10:FF:000021">
    <property type="entry name" value="Serine protease inhibitor, putative"/>
    <property type="match status" value="1"/>
</dbReference>
<dbReference type="Gene3D" id="4.10.410.10">
    <property type="entry name" value="Pancreatic trypsin inhibitor Kunitz domain"/>
    <property type="match status" value="1"/>
</dbReference>
<dbReference type="InterPro" id="IPR002223">
    <property type="entry name" value="Kunitz_BPTI"/>
</dbReference>
<dbReference type="InterPro" id="IPR036880">
    <property type="entry name" value="Kunitz_BPTI_sf"/>
</dbReference>
<dbReference type="InterPro" id="IPR020901">
    <property type="entry name" value="Prtase_inh_Kunz-CS"/>
</dbReference>
<dbReference type="InterPro" id="IPR050098">
    <property type="entry name" value="TFPI/VKTCI-like"/>
</dbReference>
<dbReference type="PANTHER" id="PTHR10083:SF374">
    <property type="entry name" value="BPTI_KUNITZ INHIBITOR DOMAIN-CONTAINING PROTEIN"/>
    <property type="match status" value="1"/>
</dbReference>
<dbReference type="PANTHER" id="PTHR10083">
    <property type="entry name" value="KUNITZ-TYPE PROTEASE INHIBITOR-RELATED"/>
    <property type="match status" value="1"/>
</dbReference>
<dbReference type="Pfam" id="PF00014">
    <property type="entry name" value="Kunitz_BPTI"/>
    <property type="match status" value="1"/>
</dbReference>
<dbReference type="PRINTS" id="PR00759">
    <property type="entry name" value="BASICPTASE"/>
</dbReference>
<dbReference type="SMART" id="SM00131">
    <property type="entry name" value="KU"/>
    <property type="match status" value="1"/>
</dbReference>
<dbReference type="SUPFAM" id="SSF57362">
    <property type="entry name" value="BPTI-like"/>
    <property type="match status" value="1"/>
</dbReference>
<dbReference type="PROSITE" id="PS00280">
    <property type="entry name" value="BPTI_KUNITZ_1"/>
    <property type="match status" value="1"/>
</dbReference>
<dbReference type="PROSITE" id="PS50279">
    <property type="entry name" value="BPTI_KUNITZ_2"/>
    <property type="match status" value="1"/>
</dbReference>
<feature type="peptide" id="PRO_0000443114" description="PI-stichotoxin-Hmg3b" evidence="4">
    <location>
        <begin position="1"/>
        <end position="56"/>
    </location>
</feature>
<feature type="domain" description="BPTI/Kunitz inhibitor" evidence="3">
    <location>
        <begin position="4"/>
        <end position="54"/>
    </location>
</feature>
<feature type="site" description="Reactive bond for trypsin" evidence="2">
    <location>
        <begin position="14"/>
        <end position="15"/>
    </location>
</feature>
<feature type="disulfide bond" evidence="3">
    <location>
        <begin position="4"/>
        <end position="54"/>
    </location>
</feature>
<feature type="disulfide bond" evidence="3">
    <location>
        <begin position="13"/>
        <end position="37"/>
    </location>
</feature>
<feature type="disulfide bond" evidence="3">
    <location>
        <begin position="29"/>
        <end position="50"/>
    </location>
</feature>
<proteinExistence type="evidence at protein level"/>
<sequence>GSICLEPKVVGPCKAGIRRFYFDSETGKCTLFLYGGCKGNGNNFETLHACRAICRA</sequence>